<organism>
    <name type="scientific">Bacillus subtilis (strain 168)</name>
    <dbReference type="NCBI Taxonomy" id="224308"/>
    <lineage>
        <taxon>Bacteria</taxon>
        <taxon>Bacillati</taxon>
        <taxon>Bacillota</taxon>
        <taxon>Bacilli</taxon>
        <taxon>Bacillales</taxon>
        <taxon>Bacillaceae</taxon>
        <taxon>Bacillus</taxon>
    </lineage>
</organism>
<keyword id="KW-1185">Reference proteome</keyword>
<keyword id="KW-0749">Sporulation</keyword>
<reference key="1">
    <citation type="journal article" date="1993" name="J. Bacteriol.">
        <title>Cloning and characterization of a cluster of genes encoding polypeptides present in the insoluble fraction of the spore coat of Bacillus subtilis.</title>
        <authorList>
            <person name="Zhang J."/>
            <person name="Fitz-James P.C."/>
            <person name="Aronson A.I."/>
        </authorList>
    </citation>
    <scope>NUCLEOTIDE SEQUENCE [GENOMIC DNA]</scope>
    <source>
        <strain>168 / JH642</strain>
    </source>
</reference>
<reference key="2">
    <citation type="journal article" date="1997" name="Nature">
        <title>The complete genome sequence of the Gram-positive bacterium Bacillus subtilis.</title>
        <authorList>
            <person name="Kunst F."/>
            <person name="Ogasawara N."/>
            <person name="Moszer I."/>
            <person name="Albertini A.M."/>
            <person name="Alloni G."/>
            <person name="Azevedo V."/>
            <person name="Bertero M.G."/>
            <person name="Bessieres P."/>
            <person name="Bolotin A."/>
            <person name="Borchert S."/>
            <person name="Borriss R."/>
            <person name="Boursier L."/>
            <person name="Brans A."/>
            <person name="Braun M."/>
            <person name="Brignell S.C."/>
            <person name="Bron S."/>
            <person name="Brouillet S."/>
            <person name="Bruschi C.V."/>
            <person name="Caldwell B."/>
            <person name="Capuano V."/>
            <person name="Carter N.M."/>
            <person name="Choi S.-K."/>
            <person name="Codani J.-J."/>
            <person name="Connerton I.F."/>
            <person name="Cummings N.J."/>
            <person name="Daniel R.A."/>
            <person name="Denizot F."/>
            <person name="Devine K.M."/>
            <person name="Duesterhoeft A."/>
            <person name="Ehrlich S.D."/>
            <person name="Emmerson P.T."/>
            <person name="Entian K.-D."/>
            <person name="Errington J."/>
            <person name="Fabret C."/>
            <person name="Ferrari E."/>
            <person name="Foulger D."/>
            <person name="Fritz C."/>
            <person name="Fujita M."/>
            <person name="Fujita Y."/>
            <person name="Fuma S."/>
            <person name="Galizzi A."/>
            <person name="Galleron N."/>
            <person name="Ghim S.-Y."/>
            <person name="Glaser P."/>
            <person name="Goffeau A."/>
            <person name="Golightly E.J."/>
            <person name="Grandi G."/>
            <person name="Guiseppi G."/>
            <person name="Guy B.J."/>
            <person name="Haga K."/>
            <person name="Haiech J."/>
            <person name="Harwood C.R."/>
            <person name="Henaut A."/>
            <person name="Hilbert H."/>
            <person name="Holsappel S."/>
            <person name="Hosono S."/>
            <person name="Hullo M.-F."/>
            <person name="Itaya M."/>
            <person name="Jones L.-M."/>
            <person name="Joris B."/>
            <person name="Karamata D."/>
            <person name="Kasahara Y."/>
            <person name="Klaerr-Blanchard M."/>
            <person name="Klein C."/>
            <person name="Kobayashi Y."/>
            <person name="Koetter P."/>
            <person name="Koningstein G."/>
            <person name="Krogh S."/>
            <person name="Kumano M."/>
            <person name="Kurita K."/>
            <person name="Lapidus A."/>
            <person name="Lardinois S."/>
            <person name="Lauber J."/>
            <person name="Lazarevic V."/>
            <person name="Lee S.-M."/>
            <person name="Levine A."/>
            <person name="Liu H."/>
            <person name="Masuda S."/>
            <person name="Mauel C."/>
            <person name="Medigue C."/>
            <person name="Medina N."/>
            <person name="Mellado R.P."/>
            <person name="Mizuno M."/>
            <person name="Moestl D."/>
            <person name="Nakai S."/>
            <person name="Noback M."/>
            <person name="Noone D."/>
            <person name="O'Reilly M."/>
            <person name="Ogawa K."/>
            <person name="Ogiwara A."/>
            <person name="Oudega B."/>
            <person name="Park S.-H."/>
            <person name="Parro V."/>
            <person name="Pohl T.M."/>
            <person name="Portetelle D."/>
            <person name="Porwollik S."/>
            <person name="Prescott A.M."/>
            <person name="Presecan E."/>
            <person name="Pujic P."/>
            <person name="Purnelle B."/>
            <person name="Rapoport G."/>
            <person name="Rey M."/>
            <person name="Reynolds S."/>
            <person name="Rieger M."/>
            <person name="Rivolta C."/>
            <person name="Rocha E."/>
            <person name="Roche B."/>
            <person name="Rose M."/>
            <person name="Sadaie Y."/>
            <person name="Sato T."/>
            <person name="Scanlan E."/>
            <person name="Schleich S."/>
            <person name="Schroeter R."/>
            <person name="Scoffone F."/>
            <person name="Sekiguchi J."/>
            <person name="Sekowska A."/>
            <person name="Seror S.J."/>
            <person name="Serror P."/>
            <person name="Shin B.-S."/>
            <person name="Soldo B."/>
            <person name="Sorokin A."/>
            <person name="Tacconi E."/>
            <person name="Takagi T."/>
            <person name="Takahashi H."/>
            <person name="Takemaru K."/>
            <person name="Takeuchi M."/>
            <person name="Tamakoshi A."/>
            <person name="Tanaka T."/>
            <person name="Terpstra P."/>
            <person name="Tognoni A."/>
            <person name="Tosato V."/>
            <person name="Uchiyama S."/>
            <person name="Vandenbol M."/>
            <person name="Vannier F."/>
            <person name="Vassarotti A."/>
            <person name="Viari A."/>
            <person name="Wambutt R."/>
            <person name="Wedler E."/>
            <person name="Wedler H."/>
            <person name="Weitzenegger T."/>
            <person name="Winters P."/>
            <person name="Wipat A."/>
            <person name="Yamamoto H."/>
            <person name="Yamane K."/>
            <person name="Yasumoto K."/>
            <person name="Yata K."/>
            <person name="Yoshida K."/>
            <person name="Yoshikawa H.-F."/>
            <person name="Zumstein E."/>
            <person name="Yoshikawa H."/>
            <person name="Danchin A."/>
        </authorList>
    </citation>
    <scope>NUCLEOTIDE SEQUENCE [LARGE SCALE GENOMIC DNA]</scope>
    <source>
        <strain>168</strain>
    </source>
</reference>
<evidence type="ECO:0000256" key="1">
    <source>
        <dbReference type="SAM" id="MobiDB-lite"/>
    </source>
</evidence>
<proteinExistence type="evidence at protein level"/>
<comment type="interaction">
    <interactant intactId="EBI-6407159">
        <id>Q08310</id>
    </interactant>
    <interactant intactId="EBI-6407165">
        <id>Q08309</id>
        <label>cotV</label>
    </interactant>
    <organismsDiffer>false</organismsDiffer>
    <experiments>3</experiments>
</comment>
<feature type="chain" id="PRO_0000079271" description="Spore coat protein W">
    <location>
        <begin position="1"/>
        <end position="105"/>
    </location>
</feature>
<feature type="region of interest" description="Disordered" evidence="1">
    <location>
        <begin position="65"/>
        <end position="105"/>
    </location>
</feature>
<dbReference type="EMBL" id="L10116">
    <property type="protein sequence ID" value="AAA22326.1"/>
    <property type="molecule type" value="Genomic_DNA"/>
</dbReference>
<dbReference type="EMBL" id="AL009126">
    <property type="protein sequence ID" value="CAB13034.1"/>
    <property type="molecule type" value="Genomic_DNA"/>
</dbReference>
<dbReference type="PIR" id="B47119">
    <property type="entry name" value="B47119"/>
</dbReference>
<dbReference type="RefSeq" id="NP_389059.1">
    <property type="nucleotide sequence ID" value="NC_000964.3"/>
</dbReference>
<dbReference type="RefSeq" id="WP_003245818.1">
    <property type="nucleotide sequence ID" value="NZ_OZ025638.1"/>
</dbReference>
<dbReference type="SMR" id="Q08310"/>
<dbReference type="FunCoup" id="Q08310">
    <property type="interactions" value="28"/>
</dbReference>
<dbReference type="IntAct" id="Q08310">
    <property type="interactions" value="1"/>
</dbReference>
<dbReference type="STRING" id="224308.BSU11770"/>
<dbReference type="PaxDb" id="224308-BSU11770"/>
<dbReference type="EnsemblBacteria" id="CAB13034">
    <property type="protein sequence ID" value="CAB13034"/>
    <property type="gene ID" value="BSU_11770"/>
</dbReference>
<dbReference type="GeneID" id="939374"/>
<dbReference type="KEGG" id="bsu:BSU11770"/>
<dbReference type="PATRIC" id="fig|224308.179.peg.1266"/>
<dbReference type="eggNOG" id="ENOG5031H3P">
    <property type="taxonomic scope" value="Bacteria"/>
</dbReference>
<dbReference type="InParanoid" id="Q08310"/>
<dbReference type="OrthoDB" id="2942239at2"/>
<dbReference type="BioCyc" id="BSUB:BSU11770-MONOMER"/>
<dbReference type="Proteomes" id="UP000001570">
    <property type="component" value="Chromosome"/>
</dbReference>
<dbReference type="GO" id="GO:0030435">
    <property type="term" value="P:sporulation resulting in formation of a cellular spore"/>
    <property type="evidence" value="ECO:0007669"/>
    <property type="project" value="UniProtKB-KW"/>
</dbReference>
<gene>
    <name type="primary">cotW</name>
    <name type="ordered locus">BSU11770</name>
</gene>
<sequence length="105" mass="12336">MSDNDKFKEELAKLPEVDPMTKMLVQNIFSKHGVTKDKMKKVSDEEKEMLLNLVKDLQAKSQALIENQKKKKEEAAAQEQKNTKPLSRREQLIEQIRQRRKNDNN</sequence>
<accession>Q08310</accession>
<name>COTW_BACSU</name>
<protein>
    <recommendedName>
        <fullName>Spore coat protein W</fullName>
    </recommendedName>
</protein>